<evidence type="ECO:0000255" key="1">
    <source>
        <dbReference type="HAMAP-Rule" id="MF_00185"/>
    </source>
</evidence>
<organism>
    <name type="scientific">Rhodospirillum centenum (strain ATCC 51521 / SW)</name>
    <dbReference type="NCBI Taxonomy" id="414684"/>
    <lineage>
        <taxon>Bacteria</taxon>
        <taxon>Pseudomonadati</taxon>
        <taxon>Pseudomonadota</taxon>
        <taxon>Alphaproteobacteria</taxon>
        <taxon>Rhodospirillales</taxon>
        <taxon>Rhodospirillaceae</taxon>
        <taxon>Rhodospirillum</taxon>
    </lineage>
</organism>
<name>MIAA_RHOCS</name>
<feature type="chain" id="PRO_0000377293" description="tRNA dimethylallyltransferase">
    <location>
        <begin position="1"/>
        <end position="314"/>
    </location>
</feature>
<feature type="region of interest" description="Interaction with substrate tRNA" evidence="1">
    <location>
        <begin position="37"/>
        <end position="40"/>
    </location>
</feature>
<feature type="binding site" evidence="1">
    <location>
        <begin position="12"/>
        <end position="19"/>
    </location>
    <ligand>
        <name>ATP</name>
        <dbReference type="ChEBI" id="CHEBI:30616"/>
    </ligand>
</feature>
<feature type="binding site" evidence="1">
    <location>
        <begin position="14"/>
        <end position="19"/>
    </location>
    <ligand>
        <name>substrate</name>
    </ligand>
</feature>
<feature type="site" description="Interaction with substrate tRNA" evidence="1">
    <location>
        <position position="103"/>
    </location>
</feature>
<feature type="site" description="Interaction with substrate tRNA" evidence="1">
    <location>
        <position position="125"/>
    </location>
</feature>
<gene>
    <name evidence="1" type="primary">miaA</name>
    <name type="ordered locus">RC1_1977</name>
</gene>
<accession>B6ITS0</accession>
<reference key="1">
    <citation type="submission" date="2007-03" db="EMBL/GenBank/DDBJ databases">
        <title>Genome sequence of Rhodospirillum centenum.</title>
        <authorList>
            <person name="Touchman J.W."/>
            <person name="Bauer C."/>
            <person name="Blankenship R.E."/>
        </authorList>
    </citation>
    <scope>NUCLEOTIDE SEQUENCE [LARGE SCALE GENOMIC DNA]</scope>
    <source>
        <strain>ATCC 51521 / SW</strain>
    </source>
</reference>
<sequence>MPATRPVLLIGGPTAGGKSALALDLAGRLSGTVVNADSMQLYDGLRVLTARPSVAEEARVPHRLYGIVPPSERMSAARWRDLALAEIAAAHDAGRVPVVVGGTGLYLRALAEGLADIPPVPEPVRAEAQALHRALGTPALHARLAAEDPDGAARLHPGDTTRVLRAWEVLRATGRPLGYWQTAGRAAPPPGLRFLTLVCEPPRDRLYAACDARFLRMLEAGALEEVRRLAALGLDPGLPAMKALGVPELLAHLRGDLPLEAATATAQQATRNYAKRQLTWFRHQIAAARRFDPGDCVERNAVMKFCVDNVTQIS</sequence>
<protein>
    <recommendedName>
        <fullName evidence="1">tRNA dimethylallyltransferase</fullName>
        <ecNumber evidence="1">2.5.1.75</ecNumber>
    </recommendedName>
    <alternativeName>
        <fullName evidence="1">Dimethylallyl diphosphate:tRNA dimethylallyltransferase</fullName>
        <shortName evidence="1">DMAPP:tRNA dimethylallyltransferase</shortName>
        <shortName evidence="1">DMATase</shortName>
    </alternativeName>
    <alternativeName>
        <fullName evidence="1">Isopentenyl-diphosphate:tRNA isopentenyltransferase</fullName>
        <shortName evidence="1">IPP transferase</shortName>
        <shortName evidence="1">IPPT</shortName>
        <shortName evidence="1">IPTase</shortName>
    </alternativeName>
</protein>
<comment type="function">
    <text evidence="1">Catalyzes the transfer of a dimethylallyl group onto the adenine at position 37 in tRNAs that read codons beginning with uridine, leading to the formation of N6-(dimethylallyl)adenosine (i(6)A).</text>
</comment>
<comment type="catalytic activity">
    <reaction evidence="1">
        <text>adenosine(37) in tRNA + dimethylallyl diphosphate = N(6)-dimethylallyladenosine(37) in tRNA + diphosphate</text>
        <dbReference type="Rhea" id="RHEA:26482"/>
        <dbReference type="Rhea" id="RHEA-COMP:10162"/>
        <dbReference type="Rhea" id="RHEA-COMP:10375"/>
        <dbReference type="ChEBI" id="CHEBI:33019"/>
        <dbReference type="ChEBI" id="CHEBI:57623"/>
        <dbReference type="ChEBI" id="CHEBI:74411"/>
        <dbReference type="ChEBI" id="CHEBI:74415"/>
        <dbReference type="EC" id="2.5.1.75"/>
    </reaction>
</comment>
<comment type="cofactor">
    <cofactor evidence="1">
        <name>Mg(2+)</name>
        <dbReference type="ChEBI" id="CHEBI:18420"/>
    </cofactor>
</comment>
<comment type="subunit">
    <text evidence="1">Monomer.</text>
</comment>
<comment type="similarity">
    <text evidence="1">Belongs to the IPP transferase family.</text>
</comment>
<dbReference type="EC" id="2.5.1.75" evidence="1"/>
<dbReference type="EMBL" id="CP000613">
    <property type="protein sequence ID" value="ACI99371.1"/>
    <property type="molecule type" value="Genomic_DNA"/>
</dbReference>
<dbReference type="RefSeq" id="WP_012567156.1">
    <property type="nucleotide sequence ID" value="NC_011420.2"/>
</dbReference>
<dbReference type="SMR" id="B6ITS0"/>
<dbReference type="STRING" id="414684.RC1_1977"/>
<dbReference type="KEGG" id="rce:RC1_1977"/>
<dbReference type="eggNOG" id="COG0324">
    <property type="taxonomic scope" value="Bacteria"/>
</dbReference>
<dbReference type="HOGENOM" id="CLU_032616_0_1_5"/>
<dbReference type="OrthoDB" id="9776390at2"/>
<dbReference type="Proteomes" id="UP000001591">
    <property type="component" value="Chromosome"/>
</dbReference>
<dbReference type="GO" id="GO:0005524">
    <property type="term" value="F:ATP binding"/>
    <property type="evidence" value="ECO:0007669"/>
    <property type="project" value="UniProtKB-UniRule"/>
</dbReference>
<dbReference type="GO" id="GO:0052381">
    <property type="term" value="F:tRNA dimethylallyltransferase activity"/>
    <property type="evidence" value="ECO:0007669"/>
    <property type="project" value="UniProtKB-UniRule"/>
</dbReference>
<dbReference type="GO" id="GO:0006400">
    <property type="term" value="P:tRNA modification"/>
    <property type="evidence" value="ECO:0007669"/>
    <property type="project" value="TreeGrafter"/>
</dbReference>
<dbReference type="Gene3D" id="1.10.20.140">
    <property type="match status" value="1"/>
</dbReference>
<dbReference type="Gene3D" id="3.40.50.300">
    <property type="entry name" value="P-loop containing nucleotide triphosphate hydrolases"/>
    <property type="match status" value="1"/>
</dbReference>
<dbReference type="HAMAP" id="MF_00185">
    <property type="entry name" value="IPP_trans"/>
    <property type="match status" value="1"/>
</dbReference>
<dbReference type="InterPro" id="IPR039657">
    <property type="entry name" value="Dimethylallyltransferase"/>
</dbReference>
<dbReference type="InterPro" id="IPR018022">
    <property type="entry name" value="IPT"/>
</dbReference>
<dbReference type="InterPro" id="IPR027417">
    <property type="entry name" value="P-loop_NTPase"/>
</dbReference>
<dbReference type="NCBIfam" id="TIGR00174">
    <property type="entry name" value="miaA"/>
    <property type="match status" value="1"/>
</dbReference>
<dbReference type="PANTHER" id="PTHR11088">
    <property type="entry name" value="TRNA DIMETHYLALLYLTRANSFERASE"/>
    <property type="match status" value="1"/>
</dbReference>
<dbReference type="PANTHER" id="PTHR11088:SF60">
    <property type="entry name" value="TRNA DIMETHYLALLYLTRANSFERASE"/>
    <property type="match status" value="1"/>
</dbReference>
<dbReference type="Pfam" id="PF01715">
    <property type="entry name" value="IPPT"/>
    <property type="match status" value="1"/>
</dbReference>
<dbReference type="SUPFAM" id="SSF52540">
    <property type="entry name" value="P-loop containing nucleoside triphosphate hydrolases"/>
    <property type="match status" value="1"/>
</dbReference>
<keyword id="KW-0067">ATP-binding</keyword>
<keyword id="KW-0460">Magnesium</keyword>
<keyword id="KW-0547">Nucleotide-binding</keyword>
<keyword id="KW-1185">Reference proteome</keyword>
<keyword id="KW-0808">Transferase</keyword>
<keyword id="KW-0819">tRNA processing</keyword>
<proteinExistence type="inferred from homology"/>